<evidence type="ECO:0000255" key="1">
    <source>
        <dbReference type="HAMAP-Rule" id="MF_00537"/>
    </source>
</evidence>
<evidence type="ECO:0000305" key="2"/>
<name>RS14_ECO24</name>
<keyword id="KW-1185">Reference proteome</keyword>
<keyword id="KW-0687">Ribonucleoprotein</keyword>
<keyword id="KW-0689">Ribosomal protein</keyword>
<keyword id="KW-0694">RNA-binding</keyword>
<keyword id="KW-0699">rRNA-binding</keyword>
<protein>
    <recommendedName>
        <fullName evidence="1">Small ribosomal subunit protein uS14</fullName>
    </recommendedName>
    <alternativeName>
        <fullName evidence="2">30S ribosomal protein S14</fullName>
    </alternativeName>
</protein>
<organism>
    <name type="scientific">Escherichia coli O139:H28 (strain E24377A / ETEC)</name>
    <dbReference type="NCBI Taxonomy" id="331111"/>
    <lineage>
        <taxon>Bacteria</taxon>
        <taxon>Pseudomonadati</taxon>
        <taxon>Pseudomonadota</taxon>
        <taxon>Gammaproteobacteria</taxon>
        <taxon>Enterobacterales</taxon>
        <taxon>Enterobacteriaceae</taxon>
        <taxon>Escherichia</taxon>
    </lineage>
</organism>
<feature type="chain" id="PRO_1000128381" description="Small ribosomal subunit protein uS14">
    <location>
        <begin position="1"/>
        <end position="101"/>
    </location>
</feature>
<gene>
    <name evidence="1" type="primary">rpsN</name>
    <name type="ordered locus">EcE24377A_3790</name>
</gene>
<proteinExistence type="inferred from homology"/>
<sequence>MAKQSMKAREVKRVALADKYFAKRAELKAIISDVNASDEDRWNAVLKLQTLPRDSSPSRQRNRCRQTGRPHGFLRKFGLSRIKVREAAMRGEIPGLKKASW</sequence>
<dbReference type="EMBL" id="CP000800">
    <property type="protein sequence ID" value="ABV19803.1"/>
    <property type="molecule type" value="Genomic_DNA"/>
</dbReference>
<dbReference type="RefSeq" id="WP_001118930.1">
    <property type="nucleotide sequence ID" value="NC_009801.1"/>
</dbReference>
<dbReference type="SMR" id="A7ZSJ6"/>
<dbReference type="GeneID" id="93778680"/>
<dbReference type="KEGG" id="ecw:EcE24377A_3790"/>
<dbReference type="HOGENOM" id="CLU_139869_0_1_6"/>
<dbReference type="Proteomes" id="UP000001122">
    <property type="component" value="Chromosome"/>
</dbReference>
<dbReference type="GO" id="GO:0005737">
    <property type="term" value="C:cytoplasm"/>
    <property type="evidence" value="ECO:0007669"/>
    <property type="project" value="UniProtKB-ARBA"/>
</dbReference>
<dbReference type="GO" id="GO:0015935">
    <property type="term" value="C:small ribosomal subunit"/>
    <property type="evidence" value="ECO:0007669"/>
    <property type="project" value="TreeGrafter"/>
</dbReference>
<dbReference type="GO" id="GO:0019843">
    <property type="term" value="F:rRNA binding"/>
    <property type="evidence" value="ECO:0007669"/>
    <property type="project" value="UniProtKB-UniRule"/>
</dbReference>
<dbReference type="GO" id="GO:0003735">
    <property type="term" value="F:structural constituent of ribosome"/>
    <property type="evidence" value="ECO:0007669"/>
    <property type="project" value="InterPro"/>
</dbReference>
<dbReference type="GO" id="GO:0006412">
    <property type="term" value="P:translation"/>
    <property type="evidence" value="ECO:0007669"/>
    <property type="project" value="UniProtKB-UniRule"/>
</dbReference>
<dbReference type="FunFam" id="1.10.287.1480:FF:000001">
    <property type="entry name" value="30S ribosomal protein S14"/>
    <property type="match status" value="1"/>
</dbReference>
<dbReference type="Gene3D" id="1.10.287.1480">
    <property type="match status" value="1"/>
</dbReference>
<dbReference type="HAMAP" id="MF_00537">
    <property type="entry name" value="Ribosomal_uS14_1"/>
    <property type="match status" value="1"/>
</dbReference>
<dbReference type="InterPro" id="IPR001209">
    <property type="entry name" value="Ribosomal_uS14"/>
</dbReference>
<dbReference type="InterPro" id="IPR023036">
    <property type="entry name" value="Ribosomal_uS14_bac/plastid"/>
</dbReference>
<dbReference type="InterPro" id="IPR018271">
    <property type="entry name" value="Ribosomal_uS14_CS"/>
</dbReference>
<dbReference type="NCBIfam" id="NF006477">
    <property type="entry name" value="PRK08881.1"/>
    <property type="match status" value="1"/>
</dbReference>
<dbReference type="PANTHER" id="PTHR19836">
    <property type="entry name" value="30S RIBOSOMAL PROTEIN S14"/>
    <property type="match status" value="1"/>
</dbReference>
<dbReference type="PANTHER" id="PTHR19836:SF19">
    <property type="entry name" value="SMALL RIBOSOMAL SUBUNIT PROTEIN US14M"/>
    <property type="match status" value="1"/>
</dbReference>
<dbReference type="Pfam" id="PF00253">
    <property type="entry name" value="Ribosomal_S14"/>
    <property type="match status" value="1"/>
</dbReference>
<dbReference type="SUPFAM" id="SSF57716">
    <property type="entry name" value="Glucocorticoid receptor-like (DNA-binding domain)"/>
    <property type="match status" value="1"/>
</dbReference>
<dbReference type="PROSITE" id="PS00527">
    <property type="entry name" value="RIBOSOMAL_S14"/>
    <property type="match status" value="1"/>
</dbReference>
<comment type="function">
    <text evidence="1">Binds 16S rRNA, required for the assembly of 30S particles and may also be responsible for determining the conformation of the 16S rRNA at the A site.</text>
</comment>
<comment type="subunit">
    <text evidence="1">Part of the 30S ribosomal subunit. Contacts proteins S3 and S10.</text>
</comment>
<comment type="similarity">
    <text evidence="1">Belongs to the universal ribosomal protein uS14 family.</text>
</comment>
<reference key="1">
    <citation type="journal article" date="2008" name="J. Bacteriol.">
        <title>The pangenome structure of Escherichia coli: comparative genomic analysis of E. coli commensal and pathogenic isolates.</title>
        <authorList>
            <person name="Rasko D.A."/>
            <person name="Rosovitz M.J."/>
            <person name="Myers G.S.A."/>
            <person name="Mongodin E.F."/>
            <person name="Fricke W.F."/>
            <person name="Gajer P."/>
            <person name="Crabtree J."/>
            <person name="Sebaihia M."/>
            <person name="Thomson N.R."/>
            <person name="Chaudhuri R."/>
            <person name="Henderson I.R."/>
            <person name="Sperandio V."/>
            <person name="Ravel J."/>
        </authorList>
    </citation>
    <scope>NUCLEOTIDE SEQUENCE [LARGE SCALE GENOMIC DNA]</scope>
    <source>
        <strain>E24377A / ETEC</strain>
    </source>
</reference>
<accession>A7ZSJ6</accession>